<comment type="function">
    <text evidence="1">mRNA decapping enzyme that specifically removes the nicotinamide adenine dinucleotide (NAD) cap from a subset of mRNAs by hydrolyzing the diphosphate linkage to produce nicotinamide mononucleotide (NMN) and 5' monophosphate mRNA. The NAD-cap is present at the 5'-end of some mRNAs and stabilizes RNA against 5'-processing. Has preference for mRNAs with a 5'-end purine. Catalyzes the hydrolysis of a broad range of dinucleotide pyrophosphates.</text>
</comment>
<comment type="catalytic activity">
    <reaction evidence="1">
        <text>a 5'-end NAD(+)-phospho-ribonucleoside in mRNA + H2O = a 5'-end phospho-adenosine-phospho-ribonucleoside in mRNA + beta-nicotinamide D-ribonucleotide + 2 H(+)</text>
        <dbReference type="Rhea" id="RHEA:60876"/>
        <dbReference type="Rhea" id="RHEA-COMP:15698"/>
        <dbReference type="Rhea" id="RHEA-COMP:15719"/>
        <dbReference type="ChEBI" id="CHEBI:14649"/>
        <dbReference type="ChEBI" id="CHEBI:15377"/>
        <dbReference type="ChEBI" id="CHEBI:15378"/>
        <dbReference type="ChEBI" id="CHEBI:144029"/>
        <dbReference type="ChEBI" id="CHEBI:144051"/>
    </reaction>
    <physiologicalReaction direction="left-to-right" evidence="1">
        <dbReference type="Rhea" id="RHEA:60877"/>
    </physiologicalReaction>
</comment>
<comment type="catalytic activity">
    <reaction evidence="1">
        <text>NAD(+) + H2O = beta-nicotinamide D-ribonucleotide + AMP + 2 H(+)</text>
        <dbReference type="Rhea" id="RHEA:11800"/>
        <dbReference type="ChEBI" id="CHEBI:14649"/>
        <dbReference type="ChEBI" id="CHEBI:15377"/>
        <dbReference type="ChEBI" id="CHEBI:15378"/>
        <dbReference type="ChEBI" id="CHEBI:57540"/>
        <dbReference type="ChEBI" id="CHEBI:456215"/>
        <dbReference type="EC" id="3.6.1.22"/>
    </reaction>
</comment>
<comment type="catalytic activity">
    <reaction evidence="1">
        <text>NADH + H2O = reduced beta-nicotinamide D-ribonucleotide + AMP + 2 H(+)</text>
        <dbReference type="Rhea" id="RHEA:48868"/>
        <dbReference type="ChEBI" id="CHEBI:15377"/>
        <dbReference type="ChEBI" id="CHEBI:15378"/>
        <dbReference type="ChEBI" id="CHEBI:57945"/>
        <dbReference type="ChEBI" id="CHEBI:90832"/>
        <dbReference type="ChEBI" id="CHEBI:456215"/>
        <dbReference type="EC" id="3.6.1.22"/>
    </reaction>
</comment>
<comment type="cofactor">
    <cofactor evidence="1">
        <name>Mg(2+)</name>
        <dbReference type="ChEBI" id="CHEBI:18420"/>
    </cofactor>
    <cofactor evidence="1">
        <name>Mn(2+)</name>
        <dbReference type="ChEBI" id="CHEBI:29035"/>
    </cofactor>
    <text evidence="1">Divalent metal cations. Mg(2+) or Mn(2+).</text>
</comment>
<comment type="cofactor">
    <cofactor evidence="1">
        <name>Zn(2+)</name>
        <dbReference type="ChEBI" id="CHEBI:29105"/>
    </cofactor>
    <text evidence="1">Binds 1 zinc ion per subunit.</text>
</comment>
<comment type="subunit">
    <text evidence="1">Homodimer.</text>
</comment>
<comment type="similarity">
    <text evidence="1">Belongs to the Nudix hydrolase family. NudC subfamily.</text>
</comment>
<proteinExistence type="inferred from homology"/>
<dbReference type="EC" id="3.6.1.-" evidence="1"/>
<dbReference type="EC" id="3.6.1.22" evidence="1"/>
<dbReference type="EMBL" id="CP000308">
    <property type="protein sequence ID" value="ABG15571.1"/>
    <property type="molecule type" value="Genomic_DNA"/>
</dbReference>
<dbReference type="RefSeq" id="WP_002210684.1">
    <property type="nucleotide sequence ID" value="NZ_CP009906.1"/>
</dbReference>
<dbReference type="SMR" id="Q1C1V1"/>
<dbReference type="GeneID" id="57974981"/>
<dbReference type="KEGG" id="ypa:YPA_3609"/>
<dbReference type="Proteomes" id="UP000001971">
    <property type="component" value="Chromosome"/>
</dbReference>
<dbReference type="GO" id="GO:0005829">
    <property type="term" value="C:cytosol"/>
    <property type="evidence" value="ECO:0007669"/>
    <property type="project" value="TreeGrafter"/>
</dbReference>
<dbReference type="GO" id="GO:0000287">
    <property type="term" value="F:magnesium ion binding"/>
    <property type="evidence" value="ECO:0007669"/>
    <property type="project" value="UniProtKB-UniRule"/>
</dbReference>
<dbReference type="GO" id="GO:0030145">
    <property type="term" value="F:manganese ion binding"/>
    <property type="evidence" value="ECO:0007669"/>
    <property type="project" value="UniProtKB-UniRule"/>
</dbReference>
<dbReference type="GO" id="GO:0000210">
    <property type="term" value="F:NAD+ diphosphatase activity"/>
    <property type="evidence" value="ECO:0007669"/>
    <property type="project" value="UniProtKB-UniRule"/>
</dbReference>
<dbReference type="GO" id="GO:0035529">
    <property type="term" value="F:NADH pyrophosphatase activity"/>
    <property type="evidence" value="ECO:0007669"/>
    <property type="project" value="TreeGrafter"/>
</dbReference>
<dbReference type="GO" id="GO:0110153">
    <property type="term" value="F:RNA NAD-cap (NMN-forming) hydrolase activity"/>
    <property type="evidence" value="ECO:0007669"/>
    <property type="project" value="RHEA"/>
</dbReference>
<dbReference type="GO" id="GO:0008270">
    <property type="term" value="F:zinc ion binding"/>
    <property type="evidence" value="ECO:0007669"/>
    <property type="project" value="UniProtKB-UniRule"/>
</dbReference>
<dbReference type="GO" id="GO:0019677">
    <property type="term" value="P:NAD catabolic process"/>
    <property type="evidence" value="ECO:0007669"/>
    <property type="project" value="TreeGrafter"/>
</dbReference>
<dbReference type="GO" id="GO:0006734">
    <property type="term" value="P:NADH metabolic process"/>
    <property type="evidence" value="ECO:0007669"/>
    <property type="project" value="TreeGrafter"/>
</dbReference>
<dbReference type="GO" id="GO:0006742">
    <property type="term" value="P:NADP catabolic process"/>
    <property type="evidence" value="ECO:0007669"/>
    <property type="project" value="TreeGrafter"/>
</dbReference>
<dbReference type="CDD" id="cd03429">
    <property type="entry name" value="NUDIX_NADH_pyrophosphatase_Nudt13"/>
    <property type="match status" value="1"/>
</dbReference>
<dbReference type="FunFam" id="3.90.79.10:FF:000004">
    <property type="entry name" value="NADH pyrophosphatase"/>
    <property type="match status" value="1"/>
</dbReference>
<dbReference type="FunFam" id="3.90.79.20:FF:000001">
    <property type="entry name" value="NADH pyrophosphatase"/>
    <property type="match status" value="1"/>
</dbReference>
<dbReference type="Gene3D" id="3.90.79.20">
    <property type="match status" value="1"/>
</dbReference>
<dbReference type="Gene3D" id="3.90.79.10">
    <property type="entry name" value="Nucleoside Triphosphate Pyrophosphohydrolase"/>
    <property type="match status" value="1"/>
</dbReference>
<dbReference type="HAMAP" id="MF_00297">
    <property type="entry name" value="Nudix_NudC"/>
    <property type="match status" value="1"/>
</dbReference>
<dbReference type="InterPro" id="IPR050241">
    <property type="entry name" value="NAD-cap_RNA_hydrolase_NudC"/>
</dbReference>
<dbReference type="InterPro" id="IPR049734">
    <property type="entry name" value="NudC-like_C"/>
</dbReference>
<dbReference type="InterPro" id="IPR015797">
    <property type="entry name" value="NUDIX_hydrolase-like_dom_sf"/>
</dbReference>
<dbReference type="InterPro" id="IPR020084">
    <property type="entry name" value="NUDIX_hydrolase_CS"/>
</dbReference>
<dbReference type="InterPro" id="IPR000086">
    <property type="entry name" value="NUDIX_hydrolase_dom"/>
</dbReference>
<dbReference type="InterPro" id="IPR022925">
    <property type="entry name" value="RNA_Hydrolase_NudC"/>
</dbReference>
<dbReference type="InterPro" id="IPR015376">
    <property type="entry name" value="Znr_NADH_PPase"/>
</dbReference>
<dbReference type="NCBIfam" id="NF001299">
    <property type="entry name" value="PRK00241.1"/>
    <property type="match status" value="1"/>
</dbReference>
<dbReference type="PANTHER" id="PTHR42904:SF6">
    <property type="entry name" value="NAD-CAPPED RNA HYDROLASE NUDT12"/>
    <property type="match status" value="1"/>
</dbReference>
<dbReference type="PANTHER" id="PTHR42904">
    <property type="entry name" value="NUDIX HYDROLASE, NUDC SUBFAMILY"/>
    <property type="match status" value="1"/>
</dbReference>
<dbReference type="Pfam" id="PF00293">
    <property type="entry name" value="NUDIX"/>
    <property type="match status" value="1"/>
</dbReference>
<dbReference type="Pfam" id="PF09297">
    <property type="entry name" value="Zn_ribbon_NUD"/>
    <property type="match status" value="1"/>
</dbReference>
<dbReference type="SUPFAM" id="SSF55811">
    <property type="entry name" value="Nudix"/>
    <property type="match status" value="2"/>
</dbReference>
<dbReference type="PROSITE" id="PS51462">
    <property type="entry name" value="NUDIX"/>
    <property type="match status" value="1"/>
</dbReference>
<dbReference type="PROSITE" id="PS00893">
    <property type="entry name" value="NUDIX_BOX"/>
    <property type="match status" value="1"/>
</dbReference>
<organism>
    <name type="scientific">Yersinia pestis bv. Antiqua (strain Antiqua)</name>
    <dbReference type="NCBI Taxonomy" id="360102"/>
    <lineage>
        <taxon>Bacteria</taxon>
        <taxon>Pseudomonadati</taxon>
        <taxon>Pseudomonadota</taxon>
        <taxon>Gammaproteobacteria</taxon>
        <taxon>Enterobacterales</taxon>
        <taxon>Yersiniaceae</taxon>
        <taxon>Yersinia</taxon>
    </lineage>
</organism>
<keyword id="KW-0378">Hydrolase</keyword>
<keyword id="KW-0460">Magnesium</keyword>
<keyword id="KW-0464">Manganese</keyword>
<keyword id="KW-0479">Metal-binding</keyword>
<keyword id="KW-0520">NAD</keyword>
<keyword id="KW-0862">Zinc</keyword>
<protein>
    <recommendedName>
        <fullName evidence="1">NAD-capped RNA hydrolase NudC</fullName>
        <shortName evidence="1">DeNADding enzyme NudC</shortName>
        <ecNumber evidence="1">3.6.1.-</ecNumber>
    </recommendedName>
    <alternativeName>
        <fullName evidence="1">NADH pyrophosphatase</fullName>
        <ecNumber evidence="1">3.6.1.22</ecNumber>
    </alternativeName>
</protein>
<feature type="chain" id="PRO_1000021917" description="NAD-capped RNA hydrolase NudC">
    <location>
        <begin position="1"/>
        <end position="260"/>
    </location>
</feature>
<feature type="domain" description="Nudix hydrolase" evidence="1">
    <location>
        <begin position="125"/>
        <end position="248"/>
    </location>
</feature>
<feature type="short sequence motif" description="Nudix box" evidence="1">
    <location>
        <begin position="159"/>
        <end position="180"/>
    </location>
</feature>
<feature type="binding site" evidence="1">
    <location>
        <position position="25"/>
    </location>
    <ligand>
        <name>substrate</name>
    </ligand>
</feature>
<feature type="binding site" evidence="1">
    <location>
        <position position="69"/>
    </location>
    <ligand>
        <name>substrate</name>
    </ligand>
</feature>
<feature type="binding site" evidence="1">
    <location>
        <position position="98"/>
    </location>
    <ligand>
        <name>Zn(2+)</name>
        <dbReference type="ChEBI" id="CHEBI:29105"/>
    </ligand>
</feature>
<feature type="binding site" evidence="1">
    <location>
        <position position="101"/>
    </location>
    <ligand>
        <name>Zn(2+)</name>
        <dbReference type="ChEBI" id="CHEBI:29105"/>
    </ligand>
</feature>
<feature type="binding site" evidence="1">
    <location>
        <position position="111"/>
    </location>
    <ligand>
        <name>substrate</name>
    </ligand>
</feature>
<feature type="binding site" evidence="1">
    <location>
        <position position="116"/>
    </location>
    <ligand>
        <name>Zn(2+)</name>
        <dbReference type="ChEBI" id="CHEBI:29105"/>
    </ligand>
</feature>
<feature type="binding site" evidence="1">
    <location>
        <position position="119"/>
    </location>
    <ligand>
        <name>Zn(2+)</name>
        <dbReference type="ChEBI" id="CHEBI:29105"/>
    </ligand>
</feature>
<feature type="binding site" evidence="1">
    <location>
        <position position="124"/>
    </location>
    <ligand>
        <name>substrate</name>
    </ligand>
</feature>
<feature type="binding site" evidence="1">
    <location>
        <position position="158"/>
    </location>
    <ligand>
        <name>a divalent metal cation</name>
        <dbReference type="ChEBI" id="CHEBI:60240"/>
        <label>1</label>
    </ligand>
</feature>
<feature type="binding site" evidence="1">
    <location>
        <position position="174"/>
    </location>
    <ligand>
        <name>a divalent metal cation</name>
        <dbReference type="ChEBI" id="CHEBI:60240"/>
        <label>2</label>
    </ligand>
</feature>
<feature type="binding site" evidence="1">
    <location>
        <position position="174"/>
    </location>
    <ligand>
        <name>a divalent metal cation</name>
        <dbReference type="ChEBI" id="CHEBI:60240"/>
        <label>3</label>
    </ligand>
</feature>
<feature type="binding site" evidence="1">
    <location>
        <position position="178"/>
    </location>
    <ligand>
        <name>a divalent metal cation</name>
        <dbReference type="ChEBI" id="CHEBI:60240"/>
        <label>1</label>
    </ligand>
</feature>
<feature type="binding site" evidence="1">
    <location>
        <position position="178"/>
    </location>
    <ligand>
        <name>a divalent metal cation</name>
        <dbReference type="ChEBI" id="CHEBI:60240"/>
        <label>3</label>
    </ligand>
</feature>
<feature type="binding site" evidence="1">
    <location>
        <begin position="192"/>
        <end position="199"/>
    </location>
    <ligand>
        <name>substrate</name>
    </ligand>
</feature>
<feature type="binding site" evidence="1">
    <location>
        <position position="219"/>
    </location>
    <ligand>
        <name>a divalent metal cation</name>
        <dbReference type="ChEBI" id="CHEBI:60240"/>
        <label>1</label>
    </ligand>
</feature>
<feature type="binding site" evidence="1">
    <location>
        <position position="219"/>
    </location>
    <ligand>
        <name>a divalent metal cation</name>
        <dbReference type="ChEBI" id="CHEBI:60240"/>
        <label>3</label>
    </ligand>
</feature>
<feature type="binding site" evidence="1">
    <location>
        <position position="241"/>
    </location>
    <ligand>
        <name>substrate</name>
    </ligand>
</feature>
<reference key="1">
    <citation type="journal article" date="2006" name="J. Bacteriol.">
        <title>Complete genome sequence of Yersinia pestis strains Antiqua and Nepal516: evidence of gene reduction in an emerging pathogen.</title>
        <authorList>
            <person name="Chain P.S.G."/>
            <person name="Hu P."/>
            <person name="Malfatti S.A."/>
            <person name="Radnedge L."/>
            <person name="Larimer F."/>
            <person name="Vergez L.M."/>
            <person name="Worsham P."/>
            <person name="Chu M.C."/>
            <person name="Andersen G.L."/>
        </authorList>
    </citation>
    <scope>NUCLEOTIDE SEQUENCE [LARGE SCALE GENOMIC DNA]</scope>
    <source>
        <strain>Antiqua</strain>
    </source>
</reference>
<sequence length="260" mass="29678">MELQLTGKESGWWIVSHENKLWLPKGELPQGNAANWSLQGTTARQIGEWQGQSVWLIRQMMPSGMGSVRQLLDVDRGLFQLAGRGVQLAEFYRSHRFCGYCGHEMHASRTEWASLCNHCRERYYPQIAPCVIVAIRRGDEILLAQHVRHRGGINTVLAGFVEVGETLEQAVSREVLEESNIHIKNLRYVTSQPWPFPHSLMMAFMADYDSGELCHDPKELLNAGWYRYDQLPLLPPPGTVARRLIEDTVVLCREHSDLSQ</sequence>
<evidence type="ECO:0000255" key="1">
    <source>
        <dbReference type="HAMAP-Rule" id="MF_00297"/>
    </source>
</evidence>
<accession>Q1C1V1</accession>
<gene>
    <name evidence="1" type="primary">nudC</name>
    <name type="ordered locus">YPA_3609</name>
</gene>
<name>NUDC_YERPA</name>